<proteinExistence type="evidence at transcript level"/>
<organism>
    <name type="scientific">Papio cynocephalus</name>
    <name type="common">Yellow baboon</name>
    <dbReference type="NCBI Taxonomy" id="9556"/>
    <lineage>
        <taxon>Eukaryota</taxon>
        <taxon>Metazoa</taxon>
        <taxon>Chordata</taxon>
        <taxon>Craniata</taxon>
        <taxon>Vertebrata</taxon>
        <taxon>Euteleostomi</taxon>
        <taxon>Mammalia</taxon>
        <taxon>Eutheria</taxon>
        <taxon>Euarchontoglires</taxon>
        <taxon>Primates</taxon>
        <taxon>Haplorrhini</taxon>
        <taxon>Catarrhini</taxon>
        <taxon>Cercopithecidae</taxon>
        <taxon>Cercopithecinae</taxon>
        <taxon>Papio</taxon>
    </lineage>
</organism>
<evidence type="ECO:0000250" key="1"/>
<evidence type="ECO:0000250" key="2">
    <source>
        <dbReference type="UniProtKB" id="P00749"/>
    </source>
</evidence>
<evidence type="ECO:0000255" key="3"/>
<evidence type="ECO:0000255" key="4">
    <source>
        <dbReference type="PROSITE-ProRule" id="PRU00076"/>
    </source>
</evidence>
<evidence type="ECO:0000255" key="5">
    <source>
        <dbReference type="PROSITE-ProRule" id="PRU00121"/>
    </source>
</evidence>
<evidence type="ECO:0000255" key="6">
    <source>
        <dbReference type="PROSITE-ProRule" id="PRU00274"/>
    </source>
</evidence>
<keyword id="KW-1015">Disulfide bond</keyword>
<keyword id="KW-0245">EGF-like domain</keyword>
<keyword id="KW-0325">Glycoprotein</keyword>
<keyword id="KW-0378">Hydrolase</keyword>
<keyword id="KW-0420">Kringle</keyword>
<keyword id="KW-0597">Phosphoprotein</keyword>
<keyword id="KW-0617">Plasminogen activation</keyword>
<keyword id="KW-0645">Protease</keyword>
<keyword id="KW-0964">Secreted</keyword>
<keyword id="KW-0720">Serine protease</keyword>
<keyword id="KW-0732">Signal</keyword>
<keyword id="KW-0865">Zymogen</keyword>
<gene>
    <name type="primary">PLAU</name>
</gene>
<comment type="function">
    <text evidence="2">Specifically cleaves the zymogen plasminogen to form the active enzyme plasmin.</text>
</comment>
<comment type="catalytic activity">
    <reaction>
        <text>Specific cleavage of Arg-|-Val bond in plasminogen to form plasmin.</text>
        <dbReference type="EC" id="3.4.21.73"/>
    </reaction>
</comment>
<comment type="activity regulation">
    <text evidence="2">Inhibited by SERPINA5 (By similarity). Inhibited by SERPINE1 (By similarity).</text>
</comment>
<comment type="subunit">
    <text evidence="2">Found in high and low molecular mass forms. Each consists of two chains, A and B. The high molecular mass form contains a long chain A which is cleaved to yield a short chain A. Forms heterodimer with SERPINA5. Binds LRP1B; binding is followed by internalization and degradation. Interacts with MRC2. Interacts with PLAUR. In complex with SERPINE1, interacts with PLAUR/uPAR. Interacts with SORL1 and LRP1, either alone or in complex with SERPINE1; these interactions are abolished in the presence of LRPAP1/RAP. The ternary complex composed of PLAUR-PLAU-PAI1 also interacts with SORLA.</text>
</comment>
<comment type="subcellular location">
    <subcellularLocation>
        <location evidence="2">Secreted</location>
    </subcellularLocation>
</comment>
<comment type="PTM">
    <text evidence="1">Phosphorylation of Ser-157 and Ser-325 abolishes proadhesive ability but does not interfere with receptor binding.</text>
</comment>
<comment type="PTM">
    <text evidence="2">Produced as an inactive single-chain protein (pro-uPA or sc-uPA), is processed into the active disulfide-linked two-chain form of PLAU/uPA by a proteolytic event mediated, at least, by TMPRSS4.</text>
</comment>
<comment type="similarity">
    <text evidence="6">Belongs to the peptidase S1 family.</text>
</comment>
<feature type="signal peptide" evidence="3">
    <location>
        <begin position="1"/>
        <end position="20"/>
    </location>
</feature>
<feature type="chain" id="PRO_0000028326" description="Urokinase-type plasminogen activator">
    <location>
        <begin position="21"/>
        <end position="433"/>
    </location>
</feature>
<feature type="chain" id="PRO_0000028327" description="Urokinase-type plasminogen activator long chain A" evidence="1">
    <location>
        <begin position="21"/>
        <end position="176"/>
    </location>
</feature>
<feature type="chain" id="PRO_0000028328" description="Urokinase-type plasminogen activator short chain A" evidence="1">
    <location>
        <begin position="155"/>
        <end position="176"/>
    </location>
</feature>
<feature type="chain" id="PRO_0000028329" description="Urokinase-type plasminogen activator chain B" evidence="1">
    <location>
        <begin position="178"/>
        <end position="433"/>
    </location>
</feature>
<feature type="domain" description="EGF-like" evidence="4">
    <location>
        <begin position="26"/>
        <end position="62"/>
    </location>
</feature>
<feature type="domain" description="Kringle" evidence="5">
    <location>
        <begin position="69"/>
        <end position="150"/>
    </location>
</feature>
<feature type="domain" description="Peptidase S1" evidence="6">
    <location>
        <begin position="178"/>
        <end position="426"/>
    </location>
</feature>
<feature type="region of interest" description="Binds urokinase plasminogen activator surface receptor" evidence="1">
    <location>
        <begin position="33"/>
        <end position="56"/>
    </location>
</feature>
<feature type="region of interest" description="Connecting peptide">
    <location>
        <begin position="151"/>
        <end position="177"/>
    </location>
</feature>
<feature type="active site" description="Charge relay system">
    <location>
        <position position="223"/>
    </location>
</feature>
<feature type="active site" description="Charge relay system">
    <location>
        <position position="274"/>
    </location>
</feature>
<feature type="active site" description="Charge relay system">
    <location>
        <position position="378"/>
    </location>
</feature>
<feature type="modified residue" description="Phosphoserine" evidence="2">
    <location>
        <position position="157"/>
    </location>
</feature>
<feature type="modified residue" description="Phosphoserine" evidence="2">
    <location>
        <position position="325"/>
    </location>
</feature>
<feature type="glycosylation site" description="N-linked (GlcNAc...) asparagine" evidence="3">
    <location>
        <position position="324"/>
    </location>
</feature>
<feature type="disulfide bond" evidence="1">
    <location>
        <begin position="30"/>
        <end position="38"/>
    </location>
</feature>
<feature type="disulfide bond" evidence="1">
    <location>
        <begin position="32"/>
        <end position="50"/>
    </location>
</feature>
<feature type="disulfide bond" evidence="1">
    <location>
        <begin position="52"/>
        <end position="61"/>
    </location>
</feature>
<feature type="disulfide bond" evidence="1">
    <location>
        <begin position="69"/>
        <end position="150"/>
    </location>
</feature>
<feature type="disulfide bond" evidence="1">
    <location>
        <begin position="90"/>
        <end position="132"/>
    </location>
</feature>
<feature type="disulfide bond" evidence="1">
    <location>
        <begin position="121"/>
        <end position="145"/>
    </location>
</feature>
<feature type="disulfide bond" description="Interchain (between A and B chains)" evidence="4 5 6">
    <location>
        <begin position="167"/>
        <end position="298"/>
    </location>
</feature>
<feature type="disulfide bond" evidence="1">
    <location>
        <begin position="208"/>
        <end position="224"/>
    </location>
</feature>
<feature type="disulfide bond" evidence="1">
    <location>
        <begin position="216"/>
        <end position="287"/>
    </location>
</feature>
<feature type="disulfide bond" evidence="1">
    <location>
        <begin position="315"/>
        <end position="384"/>
    </location>
</feature>
<feature type="disulfide bond" evidence="1">
    <location>
        <begin position="347"/>
        <end position="363"/>
    </location>
</feature>
<feature type="disulfide bond" evidence="1">
    <location>
        <begin position="374"/>
        <end position="402"/>
    </location>
</feature>
<protein>
    <recommendedName>
        <fullName>Urokinase-type plasminogen activator</fullName>
        <shortName>U-plasminogen activator</shortName>
        <shortName>uPA</shortName>
        <ecNumber>3.4.21.73</ecNumber>
    </recommendedName>
    <component>
        <recommendedName>
            <fullName>Urokinase-type plasminogen activator long chain A</fullName>
        </recommendedName>
    </component>
    <component>
        <recommendedName>
            <fullName>Urokinase-type plasminogen activator short chain A</fullName>
        </recommendedName>
    </component>
    <component>
        <recommendedName>
            <fullName>Urokinase-type plasminogen activator chain B</fullName>
        </recommendedName>
    </component>
</protein>
<accession>P16227</accession>
<reference key="1">
    <citation type="journal article" date="1990" name="Nucleic Acids Res.">
        <title>Nucleotide and deduced amino acid sequences of baboon urokinase-type plasminogen activator.</title>
        <authorList>
            <person name="Au Y.P.T."/>
            <person name="Wang T.W."/>
            <person name="Clowes A.W."/>
        </authorList>
    </citation>
    <scope>NUCLEOTIDE SEQUENCE [MRNA]</scope>
    <source>
        <tissue>Thoracic aorta</tissue>
    </source>
</reference>
<dbReference type="EC" id="3.4.21.73"/>
<dbReference type="EMBL" id="X51935">
    <property type="protein sequence ID" value="CAA36200.1"/>
    <property type="molecule type" value="mRNA"/>
</dbReference>
<dbReference type="PIR" id="S14687">
    <property type="entry name" value="UKBAY"/>
</dbReference>
<dbReference type="SMR" id="P16227"/>
<dbReference type="MEROPS" id="S01.231"/>
<dbReference type="GlyCosmos" id="P16227">
    <property type="glycosylation" value="1 site, No reported glycans"/>
</dbReference>
<dbReference type="GO" id="GO:0005615">
    <property type="term" value="C:extracellular space"/>
    <property type="evidence" value="ECO:0000250"/>
    <property type="project" value="UniProtKB"/>
</dbReference>
<dbReference type="GO" id="GO:0004252">
    <property type="term" value="F:serine-type endopeptidase activity"/>
    <property type="evidence" value="ECO:0007669"/>
    <property type="project" value="UniProtKB-EC"/>
</dbReference>
<dbReference type="GO" id="GO:0042730">
    <property type="term" value="P:fibrinolysis"/>
    <property type="evidence" value="ECO:0007669"/>
    <property type="project" value="TreeGrafter"/>
</dbReference>
<dbReference type="GO" id="GO:0031639">
    <property type="term" value="P:plasminogen activation"/>
    <property type="evidence" value="ECO:0007669"/>
    <property type="project" value="TreeGrafter"/>
</dbReference>
<dbReference type="GO" id="GO:0033628">
    <property type="term" value="P:regulation of cell adhesion mediated by integrin"/>
    <property type="evidence" value="ECO:0007669"/>
    <property type="project" value="TreeGrafter"/>
</dbReference>
<dbReference type="CDD" id="cd00108">
    <property type="entry name" value="KR"/>
    <property type="match status" value="1"/>
</dbReference>
<dbReference type="CDD" id="cd00190">
    <property type="entry name" value="Tryp_SPc"/>
    <property type="match status" value="1"/>
</dbReference>
<dbReference type="FunFam" id="2.40.10.10:FF:000068">
    <property type="entry name" value="transmembrane protease serine 2"/>
    <property type="match status" value="1"/>
</dbReference>
<dbReference type="FunFam" id="2.10.25.10:FF:000266">
    <property type="entry name" value="Urokinase-type plasminogen activator"/>
    <property type="match status" value="1"/>
</dbReference>
<dbReference type="FunFam" id="2.40.10.10:FF:000065">
    <property type="entry name" value="Urokinase-type plasminogen activator"/>
    <property type="match status" value="1"/>
</dbReference>
<dbReference type="FunFam" id="2.40.20.10:FF:000001">
    <property type="entry name" value="Urokinase-type plasminogen activator"/>
    <property type="match status" value="1"/>
</dbReference>
<dbReference type="Gene3D" id="2.10.25.10">
    <property type="entry name" value="Laminin"/>
    <property type="match status" value="1"/>
</dbReference>
<dbReference type="Gene3D" id="2.40.20.10">
    <property type="entry name" value="Plasminogen Kringle 4"/>
    <property type="match status" value="1"/>
</dbReference>
<dbReference type="Gene3D" id="2.40.10.10">
    <property type="entry name" value="Trypsin-like serine proteases"/>
    <property type="match status" value="2"/>
</dbReference>
<dbReference type="InterPro" id="IPR000742">
    <property type="entry name" value="EGF-like_dom"/>
</dbReference>
<dbReference type="InterPro" id="IPR000001">
    <property type="entry name" value="Kringle"/>
</dbReference>
<dbReference type="InterPro" id="IPR013806">
    <property type="entry name" value="Kringle-like"/>
</dbReference>
<dbReference type="InterPro" id="IPR018056">
    <property type="entry name" value="Kringle_CS"/>
</dbReference>
<dbReference type="InterPro" id="IPR038178">
    <property type="entry name" value="Kringle_sf"/>
</dbReference>
<dbReference type="InterPro" id="IPR009003">
    <property type="entry name" value="Peptidase_S1_PA"/>
</dbReference>
<dbReference type="InterPro" id="IPR043504">
    <property type="entry name" value="Peptidase_S1_PA_chymotrypsin"/>
</dbReference>
<dbReference type="InterPro" id="IPR001314">
    <property type="entry name" value="Peptidase_S1A"/>
</dbReference>
<dbReference type="InterPro" id="IPR050127">
    <property type="entry name" value="Serine_Proteases_S1"/>
</dbReference>
<dbReference type="InterPro" id="IPR001254">
    <property type="entry name" value="Trypsin_dom"/>
</dbReference>
<dbReference type="InterPro" id="IPR018114">
    <property type="entry name" value="TRYPSIN_HIS"/>
</dbReference>
<dbReference type="InterPro" id="IPR033116">
    <property type="entry name" value="TRYPSIN_SER"/>
</dbReference>
<dbReference type="PANTHER" id="PTHR24264">
    <property type="entry name" value="TRYPSIN-RELATED"/>
    <property type="match status" value="1"/>
</dbReference>
<dbReference type="PANTHER" id="PTHR24264:SF38">
    <property type="entry name" value="UROKINASE-TYPE PLASMINOGEN ACTIVATOR"/>
    <property type="match status" value="1"/>
</dbReference>
<dbReference type="Pfam" id="PF00051">
    <property type="entry name" value="Kringle"/>
    <property type="match status" value="1"/>
</dbReference>
<dbReference type="Pfam" id="PF00089">
    <property type="entry name" value="Trypsin"/>
    <property type="match status" value="1"/>
</dbReference>
<dbReference type="PRINTS" id="PR00722">
    <property type="entry name" value="CHYMOTRYPSIN"/>
</dbReference>
<dbReference type="PRINTS" id="PR00018">
    <property type="entry name" value="KRINGLE"/>
</dbReference>
<dbReference type="SMART" id="SM00130">
    <property type="entry name" value="KR"/>
    <property type="match status" value="1"/>
</dbReference>
<dbReference type="SMART" id="SM00020">
    <property type="entry name" value="Tryp_SPc"/>
    <property type="match status" value="1"/>
</dbReference>
<dbReference type="SUPFAM" id="SSF57440">
    <property type="entry name" value="Kringle-like"/>
    <property type="match status" value="1"/>
</dbReference>
<dbReference type="SUPFAM" id="SSF50494">
    <property type="entry name" value="Trypsin-like serine proteases"/>
    <property type="match status" value="1"/>
</dbReference>
<dbReference type="PROSITE" id="PS00022">
    <property type="entry name" value="EGF_1"/>
    <property type="match status" value="1"/>
</dbReference>
<dbReference type="PROSITE" id="PS50026">
    <property type="entry name" value="EGF_3"/>
    <property type="match status" value="1"/>
</dbReference>
<dbReference type="PROSITE" id="PS00021">
    <property type="entry name" value="KRINGLE_1"/>
    <property type="match status" value="1"/>
</dbReference>
<dbReference type="PROSITE" id="PS50070">
    <property type="entry name" value="KRINGLE_2"/>
    <property type="match status" value="1"/>
</dbReference>
<dbReference type="PROSITE" id="PS50240">
    <property type="entry name" value="TRYPSIN_DOM"/>
    <property type="match status" value="1"/>
</dbReference>
<dbReference type="PROSITE" id="PS00134">
    <property type="entry name" value="TRYPSIN_HIS"/>
    <property type="match status" value="1"/>
</dbReference>
<dbReference type="PROSITE" id="PS00135">
    <property type="entry name" value="TRYPSIN_SER"/>
    <property type="match status" value="1"/>
</dbReference>
<sequence>MRALLAHLLLCVLVVSASKGSRELQVPSDCGCLNGGTCMSNKYFSSIHWCNCPKKFGGQHCEIDKSKTCYEGNGHFYRGKASTDTMGRSCLAWNSATVLQQTYHAHRSDALQLGLGKHNYCRNPDNRRRPWCYVQVGLKQRVQECMVHNCADGKKPSSPPEELQFQCGQRTLRPRFKIVGGEFTTIENQPWFAAIYRRHRGGSVTYVCGGSLISPCWVVSATHCFINYPKKEDYIVYLGRSRLNSNTQGEMKFEVENLILHEDYSADTLAHHNDIALLKIRSKEGRCAQPSRTIQTICLPSMYNDPNDPPFGTSCEITGFGKENSTDYLYPEQLKMTVVKLVSHQKCQQPHYYGSEVTTKMLCAADPQWETDSCQGDSGGPLVCSIQGHMTLTGIVSWGRGCALKDKPGVYTRVSRFLPWIHSHTREQNGLAL</sequence>
<name>UROK_PAPCY</name>